<keyword id="KW-1015">Disulfide bond</keyword>
<keyword id="KW-0325">Glycoprotein</keyword>
<keyword id="KW-0393">Immunoglobulin domain</keyword>
<keyword id="KW-0472">Membrane</keyword>
<keyword id="KW-1185">Reference proteome</keyword>
<keyword id="KW-0677">Repeat</keyword>
<keyword id="KW-0732">Signal</keyword>
<keyword id="KW-0812">Transmembrane</keyword>
<keyword id="KW-1133">Transmembrane helix</keyword>
<sequence>MAVPTNSCLLVCLLTLTVLQLPTLDSAAPFDVTAPQEPVLALVGSDAELTCGFSPNASSEYMELLWFRQTRSTAVLLYRDGQEQEGQQMTEYRGRATLATAGLLDGRATLLIRDVRVSDQGEYRCLFKDNDDFEEAAVYLKVAAVGSDPQISMTVQENGEMELECTSSGWYPEPQVQWRTGNREMLPSTSESKKHNEEGLFTVAVSMMIRDSSIKNMSCCIQNILLGQGKEVEISLPAPFVPRLTPWIVAVAIILLALGFLTIGSIFFTWKLYKERSSLRKKEFGSKERLLEELRCKKTVLHEVDVTLDPDTAHPHLFLYEDSKSVRLEDSRQILPDRPERFDSWPCVLGRETFTSGRHYWEVEVGDRTDWAIGVCRENVVKKGFDPMTPDNGFWAVELYGNGYWALTPLRTSLRLAGPPRRVGVFLDYDAGDISFYNMSNGSLIYTFPSISFSGPLRPFFCLWSCGKKPLTICSTANGPEKVTVIANVQDDIPLSPLGEGCTSGDKDTLHSKLIPFSPSQAAP</sequence>
<dbReference type="EMBL" id="U67065">
    <property type="protein sequence ID" value="AAB51034.1"/>
    <property type="molecule type" value="Genomic_DNA"/>
</dbReference>
<dbReference type="EMBL" id="BC011497">
    <property type="protein sequence ID" value="AAH11497.1"/>
    <property type="molecule type" value="mRNA"/>
</dbReference>
<dbReference type="EMBL" id="BC031459">
    <property type="protein sequence ID" value="AAH31459.1"/>
    <property type="molecule type" value="mRNA"/>
</dbReference>
<dbReference type="EMBL" id="S80642">
    <property type="protein sequence ID" value="AAB35893.1"/>
    <property type="status" value="ALT_FRAME"/>
    <property type="molecule type" value="mRNA"/>
</dbReference>
<dbReference type="CCDS" id="CCDS26339.1"/>
<dbReference type="PIR" id="S65133">
    <property type="entry name" value="S65133"/>
</dbReference>
<dbReference type="RefSeq" id="NP_038511.1">
    <property type="nucleotide sequence ID" value="NM_013483.3"/>
</dbReference>
<dbReference type="RefSeq" id="XP_006516598.1">
    <property type="nucleotide sequence ID" value="XM_006516535.1"/>
</dbReference>
<dbReference type="SMR" id="Q62556"/>
<dbReference type="FunCoup" id="Q62556">
    <property type="interactions" value="338"/>
</dbReference>
<dbReference type="STRING" id="10090.ENSMUSP00000041013"/>
<dbReference type="GlyCosmos" id="Q62556">
    <property type="glycosylation" value="2 sites, No reported glycans"/>
</dbReference>
<dbReference type="GlyGen" id="Q62556">
    <property type="glycosylation" value="2 sites"/>
</dbReference>
<dbReference type="iPTMnet" id="Q62556"/>
<dbReference type="PhosphoSitePlus" id="Q62556"/>
<dbReference type="PaxDb" id="10090-ENSMUSP00000041013"/>
<dbReference type="Antibodypedia" id="2403">
    <property type="antibodies" value="366 antibodies from 24 providers"/>
</dbReference>
<dbReference type="DNASU" id="12231"/>
<dbReference type="Ensembl" id="ENSMUST00000041674.14">
    <property type="protein sequence ID" value="ENSMUSP00000041013.8"/>
    <property type="gene ID" value="ENSMUSG00000000706.17"/>
</dbReference>
<dbReference type="GeneID" id="12231"/>
<dbReference type="KEGG" id="mmu:12231"/>
<dbReference type="UCSC" id="uc007ptq.2">
    <property type="organism name" value="mouse"/>
</dbReference>
<dbReference type="AGR" id="MGI:103118"/>
<dbReference type="CTD" id="696"/>
<dbReference type="MGI" id="MGI:103118">
    <property type="gene designation" value="Btn1a1"/>
</dbReference>
<dbReference type="VEuPathDB" id="HostDB:ENSMUSG00000000706"/>
<dbReference type="eggNOG" id="ENOG502QSRZ">
    <property type="taxonomic scope" value="Eukaryota"/>
</dbReference>
<dbReference type="GeneTree" id="ENSGT00940000161530"/>
<dbReference type="HOGENOM" id="CLU_013137_22_2_1"/>
<dbReference type="InParanoid" id="Q62556"/>
<dbReference type="OMA" id="AHMELRW"/>
<dbReference type="OrthoDB" id="6105938at2759"/>
<dbReference type="PhylomeDB" id="Q62556"/>
<dbReference type="TreeFam" id="TF317532"/>
<dbReference type="Reactome" id="R-MMU-8851680">
    <property type="pathway name" value="Butyrophilin (BTN) family interactions"/>
</dbReference>
<dbReference type="BioGRID-ORCS" id="12231">
    <property type="hits" value="0 hits in 77 CRISPR screens"/>
</dbReference>
<dbReference type="ChiTaRS" id="Btn1a1">
    <property type="organism name" value="mouse"/>
</dbReference>
<dbReference type="PRO" id="PR:Q62556"/>
<dbReference type="Proteomes" id="UP000000589">
    <property type="component" value="Chromosome 13"/>
</dbReference>
<dbReference type="RNAct" id="Q62556">
    <property type="molecule type" value="protein"/>
</dbReference>
<dbReference type="Bgee" id="ENSMUSG00000000706">
    <property type="expression patterns" value="Expressed in thoracic mammary gland and 35 other cell types or tissues"/>
</dbReference>
<dbReference type="ExpressionAtlas" id="Q62556">
    <property type="expression patterns" value="baseline and differential"/>
</dbReference>
<dbReference type="GO" id="GO:0016020">
    <property type="term" value="C:membrane"/>
    <property type="evidence" value="ECO:0007669"/>
    <property type="project" value="UniProtKB-SubCell"/>
</dbReference>
<dbReference type="CDD" id="cd15819">
    <property type="entry name" value="SPRY_PRY_BTN1_2"/>
    <property type="match status" value="1"/>
</dbReference>
<dbReference type="FunFam" id="2.60.120.920:FF:000004">
    <property type="entry name" value="Butyrophilin subfamily 1 member A1"/>
    <property type="match status" value="1"/>
</dbReference>
<dbReference type="FunFam" id="2.60.40.10:FF:000088">
    <property type="entry name" value="Butyrophilin subfamily 1 member A1"/>
    <property type="match status" value="1"/>
</dbReference>
<dbReference type="FunFam" id="2.60.40.10:FF:000208">
    <property type="entry name" value="Butyrophilin subfamily 1 member A1"/>
    <property type="match status" value="1"/>
</dbReference>
<dbReference type="Gene3D" id="2.60.120.920">
    <property type="match status" value="1"/>
</dbReference>
<dbReference type="Gene3D" id="2.60.40.10">
    <property type="entry name" value="Immunoglobulins"/>
    <property type="match status" value="2"/>
</dbReference>
<dbReference type="InterPro" id="IPR001870">
    <property type="entry name" value="B30.2/SPRY"/>
</dbReference>
<dbReference type="InterPro" id="IPR043136">
    <property type="entry name" value="B30.2/SPRY_sf"/>
</dbReference>
<dbReference type="InterPro" id="IPR053896">
    <property type="entry name" value="BTN3A2-like_Ig-C"/>
</dbReference>
<dbReference type="InterPro" id="IPR003879">
    <property type="entry name" value="Butyrophylin_SPRY"/>
</dbReference>
<dbReference type="InterPro" id="IPR013320">
    <property type="entry name" value="ConA-like_dom_sf"/>
</dbReference>
<dbReference type="InterPro" id="IPR007110">
    <property type="entry name" value="Ig-like_dom"/>
</dbReference>
<dbReference type="InterPro" id="IPR036179">
    <property type="entry name" value="Ig-like_dom_sf"/>
</dbReference>
<dbReference type="InterPro" id="IPR013783">
    <property type="entry name" value="Ig-like_fold"/>
</dbReference>
<dbReference type="InterPro" id="IPR003599">
    <property type="entry name" value="Ig_sub"/>
</dbReference>
<dbReference type="InterPro" id="IPR013106">
    <property type="entry name" value="Ig_V-set"/>
</dbReference>
<dbReference type="InterPro" id="IPR050504">
    <property type="entry name" value="IgSF_BTN/MOG"/>
</dbReference>
<dbReference type="InterPro" id="IPR006574">
    <property type="entry name" value="PRY"/>
</dbReference>
<dbReference type="InterPro" id="IPR037958">
    <property type="entry name" value="SPRY/PRY_BTN1/2"/>
</dbReference>
<dbReference type="InterPro" id="IPR003877">
    <property type="entry name" value="SPRY_dom"/>
</dbReference>
<dbReference type="PANTHER" id="PTHR24100">
    <property type="entry name" value="BUTYROPHILIN"/>
    <property type="match status" value="1"/>
</dbReference>
<dbReference type="PANTHER" id="PTHR24100:SF138">
    <property type="entry name" value="BUTYROPHILIN SUBFAMILY 1 MEMBER A1"/>
    <property type="match status" value="1"/>
</dbReference>
<dbReference type="Pfam" id="PF22705">
    <property type="entry name" value="C2-set_3"/>
    <property type="match status" value="1"/>
</dbReference>
<dbReference type="Pfam" id="PF13765">
    <property type="entry name" value="PRY"/>
    <property type="match status" value="1"/>
</dbReference>
<dbReference type="Pfam" id="PF00622">
    <property type="entry name" value="SPRY"/>
    <property type="match status" value="1"/>
</dbReference>
<dbReference type="Pfam" id="PF07686">
    <property type="entry name" value="V-set"/>
    <property type="match status" value="1"/>
</dbReference>
<dbReference type="PRINTS" id="PR01407">
    <property type="entry name" value="BUTYPHLNCDUF"/>
</dbReference>
<dbReference type="SMART" id="SM00409">
    <property type="entry name" value="IG"/>
    <property type="match status" value="2"/>
</dbReference>
<dbReference type="SMART" id="SM00406">
    <property type="entry name" value="IGv"/>
    <property type="match status" value="1"/>
</dbReference>
<dbReference type="SMART" id="SM00589">
    <property type="entry name" value="PRY"/>
    <property type="match status" value="1"/>
</dbReference>
<dbReference type="SMART" id="SM00449">
    <property type="entry name" value="SPRY"/>
    <property type="match status" value="1"/>
</dbReference>
<dbReference type="SUPFAM" id="SSF49899">
    <property type="entry name" value="Concanavalin A-like lectins/glucanases"/>
    <property type="match status" value="1"/>
</dbReference>
<dbReference type="SUPFAM" id="SSF48726">
    <property type="entry name" value="Immunoglobulin"/>
    <property type="match status" value="2"/>
</dbReference>
<dbReference type="PROSITE" id="PS50188">
    <property type="entry name" value="B302_SPRY"/>
    <property type="match status" value="1"/>
</dbReference>
<dbReference type="PROSITE" id="PS50835">
    <property type="entry name" value="IG_LIKE"/>
    <property type="match status" value="2"/>
</dbReference>
<evidence type="ECO:0000250" key="1"/>
<evidence type="ECO:0000255" key="2"/>
<evidence type="ECO:0000255" key="3">
    <source>
        <dbReference type="PROSITE-ProRule" id="PRU00114"/>
    </source>
</evidence>
<evidence type="ECO:0000255" key="4">
    <source>
        <dbReference type="PROSITE-ProRule" id="PRU00548"/>
    </source>
</evidence>
<evidence type="ECO:0000269" key="5">
    <source>
    </source>
</evidence>
<evidence type="ECO:0000305" key="6"/>
<protein>
    <recommendedName>
        <fullName>Butyrophilin subfamily 1 member A1</fullName>
        <shortName>BT</shortName>
    </recommendedName>
</protein>
<feature type="signal peptide" evidence="2">
    <location>
        <begin position="1"/>
        <end position="26"/>
    </location>
</feature>
<feature type="chain" id="PRO_0000014528" description="Butyrophilin subfamily 1 member A1">
    <location>
        <begin position="27"/>
        <end position="524"/>
    </location>
</feature>
<feature type="topological domain" description="Extracellular" evidence="2">
    <location>
        <begin position="27"/>
        <end position="247"/>
    </location>
</feature>
<feature type="transmembrane region" description="Helical" evidence="2">
    <location>
        <begin position="248"/>
        <end position="268"/>
    </location>
</feature>
<feature type="topological domain" description="Cytoplasmic" evidence="2">
    <location>
        <begin position="269"/>
        <end position="524"/>
    </location>
</feature>
<feature type="domain" description="Ig-like V-type 1">
    <location>
        <begin position="29"/>
        <end position="141"/>
    </location>
</feature>
<feature type="domain" description="Ig-like V-type 2">
    <location>
        <begin position="149"/>
        <end position="235"/>
    </location>
</feature>
<feature type="domain" description="B30.2/SPRY" evidence="4">
    <location>
        <begin position="286"/>
        <end position="480"/>
    </location>
</feature>
<feature type="glycosylation site" description="N-linked (GlcNAc...) asparagine" evidence="2">
    <location>
        <position position="56"/>
    </location>
</feature>
<feature type="glycosylation site" description="N-linked (GlcNAc...) asparagine" evidence="2">
    <location>
        <position position="216"/>
    </location>
</feature>
<feature type="disulfide bond" evidence="3">
    <location>
        <begin position="51"/>
        <end position="125"/>
    </location>
</feature>
<feature type="disulfide bond" evidence="3">
    <location>
        <begin position="165"/>
        <end position="219"/>
    </location>
</feature>
<feature type="sequence conflict" description="In Ref. 2; AAH31459." evidence="6" ref="2">
    <location>
        <position position="27"/>
    </location>
</feature>
<feature type="sequence conflict" description="In Ref. 3; AAB35893." evidence="6" ref="3">
    <original>D</original>
    <variation>DD</variation>
    <location>
        <position position="46"/>
    </location>
</feature>
<feature type="sequence conflict" description="In Ref. 2; AAH11497." evidence="6" ref="2">
    <original>T</original>
    <variation>K</variation>
    <location>
        <position position="73"/>
    </location>
</feature>
<feature type="sequence conflict" description="In Ref. 3; AAB35893." evidence="6" ref="3">
    <original>V</original>
    <variation>F</variation>
    <location>
        <position position="117"/>
    </location>
</feature>
<feature type="sequence conflict" description="In Ref. 3; AAB35893." evidence="6" ref="3">
    <original>E</original>
    <variation>D</variation>
    <location>
        <position position="191"/>
    </location>
</feature>
<feature type="sequence conflict" description="In Ref. 3; AAB35893." evidence="6" ref="3">
    <original>R</original>
    <variation>S</variation>
    <location>
        <position position="210"/>
    </location>
</feature>
<feature type="sequence conflict" description="In Ref. 3; AAB35893." evidence="6" ref="3">
    <original>V</original>
    <variation>E</variation>
    <location>
        <position position="363"/>
    </location>
</feature>
<feature type="sequence conflict" description="In Ref. 3; AAB35893." evidence="6" ref="3">
    <original>T</original>
    <variation>K</variation>
    <location>
        <position position="408"/>
    </location>
</feature>
<feature type="sequence conflict" description="In Ref. 3; AAB35893." evidence="6" ref="3">
    <original>SL</original>
    <variation>FF</variation>
    <location>
        <begin position="413"/>
        <end position="414"/>
    </location>
</feature>
<feature type="sequence conflict" description="In Ref. 3; AAB35893." evidence="6" ref="3">
    <original>PRRV</original>
    <variation>LAEY</variation>
    <location>
        <begin position="420"/>
        <end position="423"/>
    </location>
</feature>
<gene>
    <name type="primary">Btn1a1</name>
    <name type="synonym">Btn</name>
</gene>
<proteinExistence type="evidence at protein level"/>
<name>BT1A1_MOUSE</name>
<comment type="function">
    <text evidence="1 5">May function in the secretion of milk-fat droplets. May act as a specific membrane-associated receptor for the association of cytoplasmic droplets with the apical plasma membrane (By similarity). Inhibits the proliferation of CD4 and CD8 T-cells activated by anti-CD3 antibodies, T-cell metabolism and IL2 and IFNG secretion.</text>
</comment>
<comment type="subunit">
    <text>Seems to associate with xanthine dehydrogenase/oxidase.</text>
</comment>
<comment type="subcellular location">
    <subcellularLocation>
        <location>Membrane</location>
        <topology>Single-pass type I membrane protein</topology>
    </subcellularLocation>
    <text>Secreted in association with the milk-fat-globule membrane during lactation.</text>
</comment>
<comment type="tissue specificity">
    <text evidence="5">Strongly expressed in lactating mammary tissue (at protein level). About 100-fold lower levels in virgin mammary tissue. Also detected in spleen and thymus at 10-20 times lower levels compared to those detected in virgin mammary gland. Very low levels in several other tissues, including brain, heart, kidney, lymph node, lung and small intestine. In the thymus, detected in the stroma, in epithelial cells (at protein level). Most prominent in medullary areas of the thymus and at the corticomedullary junction (at protein level).</text>
</comment>
<comment type="developmental stage">
    <text>Expression increases during the last half of pregnancy and is maximal during lactation.</text>
</comment>
<comment type="PTM">
    <text evidence="5">N-glycosylated.</text>
</comment>
<comment type="similarity">
    <text evidence="6">Belongs to the immunoglobulin superfamily. BTN/MOG family.</text>
</comment>
<comment type="sequence caution" evidence="6">
    <conflict type="frameshift">
        <sequence resource="EMBL-CDS" id="AAB35893"/>
    </conflict>
</comment>
<accession>Q62556</accession>
<accession>P97392</accession>
<accession>Q8K2H7</accession>
<accession>Q921K7</accession>
<reference key="1">
    <citation type="journal article" date="1996" name="Mamm. Genome">
        <title>Structural organization and mammary-specific expression of the butyrophilin gene.</title>
        <authorList>
            <person name="Ogg S.L."/>
            <person name="Komaragiri M.V.S."/>
            <person name="Mather I.H."/>
        </authorList>
    </citation>
    <scope>NUCLEOTIDE SEQUENCE [GENOMIC DNA]</scope>
    <source>
        <strain>129</strain>
        <tissue>Mammary gland</tissue>
    </source>
</reference>
<reference key="2">
    <citation type="journal article" date="2004" name="Genome Res.">
        <title>The status, quality, and expansion of the NIH full-length cDNA project: the Mammalian Gene Collection (MGC).</title>
        <authorList>
            <consortium name="The MGC Project Team"/>
        </authorList>
    </citation>
    <scope>NUCLEOTIDE SEQUENCE [LARGE SCALE MRNA]</scope>
    <source>
        <strain>FVB/N</strain>
        <tissue>Mammary tumor</tissue>
    </source>
</reference>
<reference key="3">
    <citation type="journal article" date="1995" name="Biochim. Biophys. Acta">
        <title>Carboxy-terminal cytoplasmic domain of mouse butyrophilin specifically associates with a 150-kDa protein of mammary epithelial cells and milk fat globule membrane.</title>
        <authorList>
            <person name="Ishii T."/>
            <person name="Aoki N."/>
            <person name="Noda A."/>
            <person name="Adachi T."/>
            <person name="Nakamura R."/>
            <person name="Matsuda T."/>
        </authorList>
    </citation>
    <scope>NUCLEOTIDE SEQUENCE [MRNA] OF 38-524</scope>
    <source>
        <tissue>Mammary gland</tissue>
    </source>
</reference>
<reference key="4">
    <citation type="journal article" date="2010" name="J. Immunol.">
        <title>BTN1A1, the mammary gland butyrophilin, and BTN2A2 are both inhibitors of T cell activation.</title>
        <authorList>
            <person name="Smith I.A."/>
            <person name="Knezevic B.R."/>
            <person name="Ammann J.U."/>
            <person name="Rhodes D.A."/>
            <person name="Aw D."/>
            <person name="Palmer D.B."/>
            <person name="Mather I.H."/>
            <person name="Trowsdale J."/>
        </authorList>
    </citation>
    <scope>FUNCTION</scope>
    <scope>TISSUE SPECIFICITY</scope>
    <scope>GLYCOSYLATION</scope>
</reference>
<organism>
    <name type="scientific">Mus musculus</name>
    <name type="common">Mouse</name>
    <dbReference type="NCBI Taxonomy" id="10090"/>
    <lineage>
        <taxon>Eukaryota</taxon>
        <taxon>Metazoa</taxon>
        <taxon>Chordata</taxon>
        <taxon>Craniata</taxon>
        <taxon>Vertebrata</taxon>
        <taxon>Euteleostomi</taxon>
        <taxon>Mammalia</taxon>
        <taxon>Eutheria</taxon>
        <taxon>Euarchontoglires</taxon>
        <taxon>Glires</taxon>
        <taxon>Rodentia</taxon>
        <taxon>Myomorpha</taxon>
        <taxon>Muroidea</taxon>
        <taxon>Muridae</taxon>
        <taxon>Murinae</taxon>
        <taxon>Mus</taxon>
        <taxon>Mus</taxon>
    </lineage>
</organism>